<name>FBPC1_HAEIN</name>
<organism>
    <name type="scientific">Haemophilus influenzae (strain ATCC 51907 / DSM 11121 / KW20 / Rd)</name>
    <dbReference type="NCBI Taxonomy" id="71421"/>
    <lineage>
        <taxon>Bacteria</taxon>
        <taxon>Pseudomonadati</taxon>
        <taxon>Pseudomonadota</taxon>
        <taxon>Gammaproteobacteria</taxon>
        <taxon>Pasteurellales</taxon>
        <taxon>Pasteurellaceae</taxon>
        <taxon>Haemophilus</taxon>
    </lineage>
</organism>
<reference key="1">
    <citation type="journal article" date="1995" name="Science">
        <title>Whole-genome random sequencing and assembly of Haemophilus influenzae Rd.</title>
        <authorList>
            <person name="Fleischmann R.D."/>
            <person name="Adams M.D."/>
            <person name="White O."/>
            <person name="Clayton R.A."/>
            <person name="Kirkness E.F."/>
            <person name="Kerlavage A.R."/>
            <person name="Bult C.J."/>
            <person name="Tomb J.-F."/>
            <person name="Dougherty B.A."/>
            <person name="Merrick J.M."/>
            <person name="McKenney K."/>
            <person name="Sutton G.G."/>
            <person name="FitzHugh W."/>
            <person name="Fields C.A."/>
            <person name="Gocayne J.D."/>
            <person name="Scott J.D."/>
            <person name="Shirley R."/>
            <person name="Liu L.-I."/>
            <person name="Glodek A."/>
            <person name="Kelley J.M."/>
            <person name="Weidman J.F."/>
            <person name="Phillips C.A."/>
            <person name="Spriggs T."/>
            <person name="Hedblom E."/>
            <person name="Cotton M.D."/>
            <person name="Utterback T.R."/>
            <person name="Hanna M.C."/>
            <person name="Nguyen D.T."/>
            <person name="Saudek D.M."/>
            <person name="Brandon R.C."/>
            <person name="Fine L.D."/>
            <person name="Fritchman J.L."/>
            <person name="Fuhrmann J.L."/>
            <person name="Geoghagen N.S.M."/>
            <person name="Gnehm C.L."/>
            <person name="McDonald L.A."/>
            <person name="Small K.V."/>
            <person name="Fraser C.M."/>
            <person name="Smith H.O."/>
            <person name="Venter J.C."/>
        </authorList>
    </citation>
    <scope>NUCLEOTIDE SEQUENCE [LARGE SCALE GENOMIC DNA]</scope>
    <source>
        <strain>ATCC 51907 / DSM 11121 / KW20 / Rd</strain>
    </source>
</reference>
<proteinExistence type="inferred from homology"/>
<feature type="chain" id="PRO_0000092352" description="Fe(3+) ions import ATP-binding protein FbpC 1">
    <location>
        <begin position="1"/>
        <end position="328"/>
    </location>
</feature>
<feature type="domain" description="ABC transporter" evidence="1">
    <location>
        <begin position="7"/>
        <end position="237"/>
    </location>
</feature>
<feature type="binding site" evidence="1">
    <location>
        <begin position="39"/>
        <end position="46"/>
    </location>
    <ligand>
        <name>ATP</name>
        <dbReference type="ChEBI" id="CHEBI:30616"/>
    </ligand>
</feature>
<comment type="function">
    <text evidence="1">Part of the ABC transporter complex FbpABC involved in Fe(3+) ions import. Responsible for energy coupling to the transport system.</text>
</comment>
<comment type="catalytic activity">
    <reaction evidence="1">
        <text>Fe(3+)(out) + ATP + H2O = Fe(3+)(in) + ADP + phosphate + H(+)</text>
        <dbReference type="Rhea" id="RHEA:12332"/>
        <dbReference type="ChEBI" id="CHEBI:15377"/>
        <dbReference type="ChEBI" id="CHEBI:15378"/>
        <dbReference type="ChEBI" id="CHEBI:29034"/>
        <dbReference type="ChEBI" id="CHEBI:30616"/>
        <dbReference type="ChEBI" id="CHEBI:43474"/>
        <dbReference type="ChEBI" id="CHEBI:456216"/>
        <dbReference type="EC" id="7.2.2.7"/>
    </reaction>
</comment>
<comment type="subunit">
    <text evidence="1">The complex is composed of two ATP-binding proteins (FbpC), two transmembrane proteins (FbpB) and a solute-binding protein (FbpA).</text>
</comment>
<comment type="subcellular location">
    <subcellularLocation>
        <location evidence="1">Cell inner membrane</location>
        <topology evidence="1">Peripheral membrane protein</topology>
    </subcellularLocation>
</comment>
<comment type="similarity">
    <text evidence="1">Belongs to the ABC transporter superfamily. Fe(3+) ion importer (TC 3.A.1.10) family.</text>
</comment>
<evidence type="ECO:0000255" key="1">
    <source>
        <dbReference type="HAMAP-Rule" id="MF_01706"/>
    </source>
</evidence>
<sequence length="328" mass="36047">MSNNDFLVLKNITKAFGKAVVIDNLDLTIKRGTMVTLLGPSGCGKTTVLRLVAGLENPTSGQIFIDGEDVTKSSIQNRDICIVFQSYALFPHMSIGDNVGYGLKMQGIGKEERAQRVKEALELVDLAGFEDRFVDQISGGQQQRVALARALVLKPKVLLFDEPLSNLDANLRRSMREKIRELQQRLGITSLYVTHDQTEAFAVSDEVIVMNKGKIMQKAPAKELYLRPNSLFLANFMGESSIFDGKLENGVADINGYSVPLKDAAQFNLPDGECLVGIRPEAIYLAAEGSDAQRCEIKSAVYMGQPLGKWLQTGRGKDLLVNCKPEGF</sequence>
<accession>P44531</accession>
<keyword id="KW-0067">ATP-binding</keyword>
<keyword id="KW-0997">Cell inner membrane</keyword>
<keyword id="KW-1003">Cell membrane</keyword>
<keyword id="KW-0406">Ion transport</keyword>
<keyword id="KW-0408">Iron</keyword>
<keyword id="KW-0410">Iron transport</keyword>
<keyword id="KW-0472">Membrane</keyword>
<keyword id="KW-0547">Nucleotide-binding</keyword>
<keyword id="KW-1185">Reference proteome</keyword>
<keyword id="KW-1278">Translocase</keyword>
<keyword id="KW-0813">Transport</keyword>
<protein>
    <recommendedName>
        <fullName evidence="1">Fe(3+) ions import ATP-binding protein FbpC 1</fullName>
        <ecNumber evidence="1">7.2.2.7</ecNumber>
    </recommendedName>
</protein>
<gene>
    <name evidence="1" type="primary">fbpC1</name>
    <name type="synonym">afuC</name>
    <name type="ordered locus">HI_0126</name>
</gene>
<dbReference type="EC" id="7.2.2.7" evidence="1"/>
<dbReference type="EMBL" id="L42023">
    <property type="protein sequence ID" value="AAC21800.1"/>
    <property type="molecule type" value="Genomic_DNA"/>
</dbReference>
<dbReference type="PIR" id="D64143">
    <property type="entry name" value="D64143"/>
</dbReference>
<dbReference type="RefSeq" id="NP_438298.1">
    <property type="nucleotide sequence ID" value="NC_000907.1"/>
</dbReference>
<dbReference type="SMR" id="P44531"/>
<dbReference type="STRING" id="71421.HI_0126"/>
<dbReference type="EnsemblBacteria" id="AAC21800">
    <property type="protein sequence ID" value="AAC21800"/>
    <property type="gene ID" value="HI_0126"/>
</dbReference>
<dbReference type="KEGG" id="hin:HI_0126"/>
<dbReference type="PATRIC" id="fig|71421.8.peg.131"/>
<dbReference type="eggNOG" id="COG3842">
    <property type="taxonomic scope" value="Bacteria"/>
</dbReference>
<dbReference type="HOGENOM" id="CLU_000604_1_1_6"/>
<dbReference type="OrthoDB" id="9802264at2"/>
<dbReference type="PhylomeDB" id="P44531"/>
<dbReference type="BioCyc" id="HINF71421:G1GJ1-139-MONOMER"/>
<dbReference type="Proteomes" id="UP000000579">
    <property type="component" value="Chromosome"/>
</dbReference>
<dbReference type="GO" id="GO:0043190">
    <property type="term" value="C:ATP-binding cassette (ABC) transporter complex"/>
    <property type="evidence" value="ECO:0007669"/>
    <property type="project" value="InterPro"/>
</dbReference>
<dbReference type="GO" id="GO:0005886">
    <property type="term" value="C:plasma membrane"/>
    <property type="evidence" value="ECO:0000318"/>
    <property type="project" value="GO_Central"/>
</dbReference>
<dbReference type="GO" id="GO:0015408">
    <property type="term" value="F:ABC-type ferric iron transporter activity"/>
    <property type="evidence" value="ECO:0007669"/>
    <property type="project" value="UniProtKB-EC"/>
</dbReference>
<dbReference type="GO" id="GO:0005524">
    <property type="term" value="F:ATP binding"/>
    <property type="evidence" value="ECO:0007669"/>
    <property type="project" value="UniProtKB-KW"/>
</dbReference>
<dbReference type="GO" id="GO:0016887">
    <property type="term" value="F:ATP hydrolysis activity"/>
    <property type="evidence" value="ECO:0007669"/>
    <property type="project" value="InterPro"/>
</dbReference>
<dbReference type="GO" id="GO:0022857">
    <property type="term" value="F:transmembrane transporter activity"/>
    <property type="evidence" value="ECO:0000318"/>
    <property type="project" value="GO_Central"/>
</dbReference>
<dbReference type="GO" id="GO:0055085">
    <property type="term" value="P:transmembrane transport"/>
    <property type="evidence" value="ECO:0000318"/>
    <property type="project" value="GO_Central"/>
</dbReference>
<dbReference type="CDD" id="cd03259">
    <property type="entry name" value="ABC_Carb_Solutes_like"/>
    <property type="match status" value="1"/>
</dbReference>
<dbReference type="FunFam" id="3.40.50.300:FF:002767">
    <property type="entry name" value="Fe(3+) ions import ATP-binding protein FbpC"/>
    <property type="match status" value="1"/>
</dbReference>
<dbReference type="Gene3D" id="2.40.50.100">
    <property type="match status" value="1"/>
</dbReference>
<dbReference type="Gene3D" id="3.40.50.300">
    <property type="entry name" value="P-loop containing nucleotide triphosphate hydrolases"/>
    <property type="match status" value="1"/>
</dbReference>
<dbReference type="InterPro" id="IPR003593">
    <property type="entry name" value="AAA+_ATPase"/>
</dbReference>
<dbReference type="InterPro" id="IPR050093">
    <property type="entry name" value="ABC_SmlMolc_Importer"/>
</dbReference>
<dbReference type="InterPro" id="IPR003439">
    <property type="entry name" value="ABC_transporter-like_ATP-bd"/>
</dbReference>
<dbReference type="InterPro" id="IPR017871">
    <property type="entry name" value="ABC_transporter-like_CS"/>
</dbReference>
<dbReference type="InterPro" id="IPR015853">
    <property type="entry name" value="ABC_transpr_FbpC"/>
</dbReference>
<dbReference type="InterPro" id="IPR008995">
    <property type="entry name" value="Mo/tungstate-bd_C_term_dom"/>
</dbReference>
<dbReference type="InterPro" id="IPR027417">
    <property type="entry name" value="P-loop_NTPase"/>
</dbReference>
<dbReference type="InterPro" id="IPR013611">
    <property type="entry name" value="Transp-assoc_OB_typ2"/>
</dbReference>
<dbReference type="NCBIfam" id="NF008513">
    <property type="entry name" value="PRK11432.1"/>
    <property type="match status" value="1"/>
</dbReference>
<dbReference type="PANTHER" id="PTHR42781">
    <property type="entry name" value="SPERMIDINE/PUTRESCINE IMPORT ATP-BINDING PROTEIN POTA"/>
    <property type="match status" value="1"/>
</dbReference>
<dbReference type="PANTHER" id="PTHR42781:SF4">
    <property type="entry name" value="SPERMIDINE_PUTRESCINE IMPORT ATP-BINDING PROTEIN POTA"/>
    <property type="match status" value="1"/>
</dbReference>
<dbReference type="Pfam" id="PF00005">
    <property type="entry name" value="ABC_tran"/>
    <property type="match status" value="1"/>
</dbReference>
<dbReference type="Pfam" id="PF08402">
    <property type="entry name" value="TOBE_2"/>
    <property type="match status" value="1"/>
</dbReference>
<dbReference type="SMART" id="SM00382">
    <property type="entry name" value="AAA"/>
    <property type="match status" value="1"/>
</dbReference>
<dbReference type="SUPFAM" id="SSF50331">
    <property type="entry name" value="MOP-like"/>
    <property type="match status" value="1"/>
</dbReference>
<dbReference type="SUPFAM" id="SSF52540">
    <property type="entry name" value="P-loop containing nucleoside triphosphate hydrolases"/>
    <property type="match status" value="1"/>
</dbReference>
<dbReference type="PROSITE" id="PS00211">
    <property type="entry name" value="ABC_TRANSPORTER_1"/>
    <property type="match status" value="1"/>
</dbReference>
<dbReference type="PROSITE" id="PS50893">
    <property type="entry name" value="ABC_TRANSPORTER_2"/>
    <property type="match status" value="1"/>
</dbReference>
<dbReference type="PROSITE" id="PS51242">
    <property type="entry name" value="FBPC"/>
    <property type="match status" value="1"/>
</dbReference>